<reference key="1">
    <citation type="journal article" date="2005" name="Science">
        <title>The transcriptional landscape of the mammalian genome.</title>
        <authorList>
            <person name="Carninci P."/>
            <person name="Kasukawa T."/>
            <person name="Katayama S."/>
            <person name="Gough J."/>
            <person name="Frith M.C."/>
            <person name="Maeda N."/>
            <person name="Oyama R."/>
            <person name="Ravasi T."/>
            <person name="Lenhard B."/>
            <person name="Wells C."/>
            <person name="Kodzius R."/>
            <person name="Shimokawa K."/>
            <person name="Bajic V.B."/>
            <person name="Brenner S.E."/>
            <person name="Batalov S."/>
            <person name="Forrest A.R."/>
            <person name="Zavolan M."/>
            <person name="Davis M.J."/>
            <person name="Wilming L.G."/>
            <person name="Aidinis V."/>
            <person name="Allen J.E."/>
            <person name="Ambesi-Impiombato A."/>
            <person name="Apweiler R."/>
            <person name="Aturaliya R.N."/>
            <person name="Bailey T.L."/>
            <person name="Bansal M."/>
            <person name="Baxter L."/>
            <person name="Beisel K.W."/>
            <person name="Bersano T."/>
            <person name="Bono H."/>
            <person name="Chalk A.M."/>
            <person name="Chiu K.P."/>
            <person name="Choudhary V."/>
            <person name="Christoffels A."/>
            <person name="Clutterbuck D.R."/>
            <person name="Crowe M.L."/>
            <person name="Dalla E."/>
            <person name="Dalrymple B.P."/>
            <person name="de Bono B."/>
            <person name="Della Gatta G."/>
            <person name="di Bernardo D."/>
            <person name="Down T."/>
            <person name="Engstrom P."/>
            <person name="Fagiolini M."/>
            <person name="Faulkner G."/>
            <person name="Fletcher C.F."/>
            <person name="Fukushima T."/>
            <person name="Furuno M."/>
            <person name="Futaki S."/>
            <person name="Gariboldi M."/>
            <person name="Georgii-Hemming P."/>
            <person name="Gingeras T.R."/>
            <person name="Gojobori T."/>
            <person name="Green R.E."/>
            <person name="Gustincich S."/>
            <person name="Harbers M."/>
            <person name="Hayashi Y."/>
            <person name="Hensch T.K."/>
            <person name="Hirokawa N."/>
            <person name="Hill D."/>
            <person name="Huminiecki L."/>
            <person name="Iacono M."/>
            <person name="Ikeo K."/>
            <person name="Iwama A."/>
            <person name="Ishikawa T."/>
            <person name="Jakt M."/>
            <person name="Kanapin A."/>
            <person name="Katoh M."/>
            <person name="Kawasawa Y."/>
            <person name="Kelso J."/>
            <person name="Kitamura H."/>
            <person name="Kitano H."/>
            <person name="Kollias G."/>
            <person name="Krishnan S.P."/>
            <person name="Kruger A."/>
            <person name="Kummerfeld S.K."/>
            <person name="Kurochkin I.V."/>
            <person name="Lareau L.F."/>
            <person name="Lazarevic D."/>
            <person name="Lipovich L."/>
            <person name="Liu J."/>
            <person name="Liuni S."/>
            <person name="McWilliam S."/>
            <person name="Madan Babu M."/>
            <person name="Madera M."/>
            <person name="Marchionni L."/>
            <person name="Matsuda H."/>
            <person name="Matsuzawa S."/>
            <person name="Miki H."/>
            <person name="Mignone F."/>
            <person name="Miyake S."/>
            <person name="Morris K."/>
            <person name="Mottagui-Tabar S."/>
            <person name="Mulder N."/>
            <person name="Nakano N."/>
            <person name="Nakauchi H."/>
            <person name="Ng P."/>
            <person name="Nilsson R."/>
            <person name="Nishiguchi S."/>
            <person name="Nishikawa S."/>
            <person name="Nori F."/>
            <person name="Ohara O."/>
            <person name="Okazaki Y."/>
            <person name="Orlando V."/>
            <person name="Pang K.C."/>
            <person name="Pavan W.J."/>
            <person name="Pavesi G."/>
            <person name="Pesole G."/>
            <person name="Petrovsky N."/>
            <person name="Piazza S."/>
            <person name="Reed J."/>
            <person name="Reid J.F."/>
            <person name="Ring B.Z."/>
            <person name="Ringwald M."/>
            <person name="Rost B."/>
            <person name="Ruan Y."/>
            <person name="Salzberg S.L."/>
            <person name="Sandelin A."/>
            <person name="Schneider C."/>
            <person name="Schoenbach C."/>
            <person name="Sekiguchi K."/>
            <person name="Semple C.A."/>
            <person name="Seno S."/>
            <person name="Sessa L."/>
            <person name="Sheng Y."/>
            <person name="Shibata Y."/>
            <person name="Shimada H."/>
            <person name="Shimada K."/>
            <person name="Silva D."/>
            <person name="Sinclair B."/>
            <person name="Sperling S."/>
            <person name="Stupka E."/>
            <person name="Sugiura K."/>
            <person name="Sultana R."/>
            <person name="Takenaka Y."/>
            <person name="Taki K."/>
            <person name="Tammoja K."/>
            <person name="Tan S.L."/>
            <person name="Tang S."/>
            <person name="Taylor M.S."/>
            <person name="Tegner J."/>
            <person name="Teichmann S.A."/>
            <person name="Ueda H.R."/>
            <person name="van Nimwegen E."/>
            <person name="Verardo R."/>
            <person name="Wei C.L."/>
            <person name="Yagi K."/>
            <person name="Yamanishi H."/>
            <person name="Zabarovsky E."/>
            <person name="Zhu S."/>
            <person name="Zimmer A."/>
            <person name="Hide W."/>
            <person name="Bult C."/>
            <person name="Grimmond S.M."/>
            <person name="Teasdale R.D."/>
            <person name="Liu E.T."/>
            <person name="Brusic V."/>
            <person name="Quackenbush J."/>
            <person name="Wahlestedt C."/>
            <person name="Mattick J.S."/>
            <person name="Hume D.A."/>
            <person name="Kai C."/>
            <person name="Sasaki D."/>
            <person name="Tomaru Y."/>
            <person name="Fukuda S."/>
            <person name="Kanamori-Katayama M."/>
            <person name="Suzuki M."/>
            <person name="Aoki J."/>
            <person name="Arakawa T."/>
            <person name="Iida J."/>
            <person name="Imamura K."/>
            <person name="Itoh M."/>
            <person name="Kato T."/>
            <person name="Kawaji H."/>
            <person name="Kawagashira N."/>
            <person name="Kawashima T."/>
            <person name="Kojima M."/>
            <person name="Kondo S."/>
            <person name="Konno H."/>
            <person name="Nakano K."/>
            <person name="Ninomiya N."/>
            <person name="Nishio T."/>
            <person name="Okada M."/>
            <person name="Plessy C."/>
            <person name="Shibata K."/>
            <person name="Shiraki T."/>
            <person name="Suzuki S."/>
            <person name="Tagami M."/>
            <person name="Waki K."/>
            <person name="Watahiki A."/>
            <person name="Okamura-Oho Y."/>
            <person name="Suzuki H."/>
            <person name="Kawai J."/>
            <person name="Hayashizaki Y."/>
        </authorList>
    </citation>
    <scope>NUCLEOTIDE SEQUENCE [LARGE SCALE MRNA] (ISOFORMS 1 AND 2)</scope>
    <source>
        <strain>C57BL/6J</strain>
        <tissue>Testis</tissue>
    </source>
</reference>
<reference key="2">
    <citation type="journal article" date="2009" name="PLoS Biol.">
        <title>Lineage-specific biology revealed by a finished genome assembly of the mouse.</title>
        <authorList>
            <person name="Church D.M."/>
            <person name="Goodstadt L."/>
            <person name="Hillier L.W."/>
            <person name="Zody M.C."/>
            <person name="Goldstein S."/>
            <person name="She X."/>
            <person name="Bult C.J."/>
            <person name="Agarwala R."/>
            <person name="Cherry J.L."/>
            <person name="DiCuccio M."/>
            <person name="Hlavina W."/>
            <person name="Kapustin Y."/>
            <person name="Meric P."/>
            <person name="Maglott D."/>
            <person name="Birtle Z."/>
            <person name="Marques A.C."/>
            <person name="Graves T."/>
            <person name="Zhou S."/>
            <person name="Teague B."/>
            <person name="Potamousis K."/>
            <person name="Churas C."/>
            <person name="Place M."/>
            <person name="Herschleb J."/>
            <person name="Runnheim R."/>
            <person name="Forrest D."/>
            <person name="Amos-Landgraf J."/>
            <person name="Schwartz D.C."/>
            <person name="Cheng Z."/>
            <person name="Lindblad-Toh K."/>
            <person name="Eichler E.E."/>
            <person name="Ponting C.P."/>
        </authorList>
    </citation>
    <scope>NUCLEOTIDE SEQUENCE [LARGE SCALE GENOMIC DNA]</scope>
    <source>
        <strain>C57BL/6J</strain>
    </source>
</reference>
<reference key="3">
    <citation type="journal article" date="2010" name="Cell">
        <title>A tissue-specific atlas of mouse protein phosphorylation and expression.</title>
        <authorList>
            <person name="Huttlin E.L."/>
            <person name="Jedrychowski M.P."/>
            <person name="Elias J.E."/>
            <person name="Goswami T."/>
            <person name="Rad R."/>
            <person name="Beausoleil S.A."/>
            <person name="Villen J."/>
            <person name="Haas W."/>
            <person name="Sowa M.E."/>
            <person name="Gygi S.P."/>
        </authorList>
    </citation>
    <scope>IDENTIFICATION BY MASS SPECTROMETRY [LARGE SCALE ANALYSIS]</scope>
    <source>
        <tissue>Testis</tissue>
    </source>
</reference>
<reference evidence="11" key="4">
    <citation type="journal article" date="2023" name="Cell">
        <title>Structures of sperm flagellar doublet microtubules expand the genetic spectrum of male infertility.</title>
        <authorList>
            <person name="Zhou L."/>
            <person name="Liu H."/>
            <person name="Liu S."/>
            <person name="Yang X."/>
            <person name="Dong Y."/>
            <person name="Pan Y."/>
            <person name="Xiao Z."/>
            <person name="Zheng B."/>
            <person name="Sun Y."/>
            <person name="Huang P."/>
            <person name="Zhang X."/>
            <person name="Hu J."/>
            <person name="Sun R."/>
            <person name="Feng S."/>
            <person name="Zhu Y."/>
            <person name="Liu M."/>
            <person name="Gui M."/>
            <person name="Wu J."/>
        </authorList>
    </citation>
    <scope>STRUCTURE BY ELECTRON MICROSCOPY (3.50 ANGSTROMS) OF SPERM FLAGELLAR DOUBLET MICROTUBULES</scope>
    <scope>FUNCTION</scope>
    <scope>SUBCELLULAR LOCATION</scope>
    <scope>SUBUNIT</scope>
</reference>
<reference evidence="12" key="5">
    <citation type="journal article" date="2023" name="Cell">
        <title>De novo protein identification in mammalian sperm using in situ cryoelectron tomography and AlphaFold2 docking.</title>
        <authorList>
            <person name="Chen Z."/>
            <person name="Shiozaki M."/>
            <person name="Haas K.M."/>
            <person name="Skinner W.M."/>
            <person name="Zhao S."/>
            <person name="Guo C."/>
            <person name="Polacco B.J."/>
            <person name="Yu Z."/>
            <person name="Krogan N.J."/>
            <person name="Lishko P.V."/>
            <person name="Kaake R.M."/>
            <person name="Vale R.D."/>
            <person name="Agard D.A."/>
        </authorList>
    </citation>
    <scope>STRUCTURE BY ELECTRON MICROSCOPY (7.70 ANGSTROMS) OF SPERM FLAGELLAR DOUBLET MICROTUBULES</scope>
    <scope>FUNCTION</scope>
    <scope>SUBCELLULAR LOCATION</scope>
    <scope>SUBUNIT</scope>
</reference>
<reference evidence="9 10" key="6">
    <citation type="journal article" date="2023" name="Cell Discov.">
        <title>In-cell structural insight into the stability of sperm microtubule doublet.</title>
        <authorList>
            <person name="Tai L."/>
            <person name="Yin G."/>
            <person name="Huang X."/>
            <person name="Sun F."/>
            <person name="Zhu Y."/>
        </authorList>
    </citation>
    <scope>STRUCTURE BY ELECTRON MICROSCOPY (4.50 ANGSTROMS)</scope>
    <scope>FUNCTION</scope>
    <scope>SUBUNIT</scope>
    <scope>SUBCELLULAR LOCATION</scope>
</reference>
<dbReference type="EMBL" id="AK006118">
    <property type="protein sequence ID" value="BAB24416.1"/>
    <property type="molecule type" value="mRNA"/>
</dbReference>
<dbReference type="EMBL" id="AK016839">
    <property type="protein sequence ID" value="BAB30457.1"/>
    <property type="molecule type" value="mRNA"/>
</dbReference>
<dbReference type="EMBL" id="AL663076">
    <property type="status" value="NOT_ANNOTATED_CDS"/>
    <property type="molecule type" value="Genomic_DNA"/>
</dbReference>
<dbReference type="EMBL" id="AL732570">
    <property type="status" value="NOT_ANNOTATED_CDS"/>
    <property type="molecule type" value="Genomic_DNA"/>
</dbReference>
<dbReference type="CCDS" id="CCDS24862.1">
    <molecule id="Q5F201-1"/>
</dbReference>
<dbReference type="RefSeq" id="NP_082239.2">
    <molecule id="Q5F201-1"/>
    <property type="nucleotide sequence ID" value="NM_027963.2"/>
</dbReference>
<dbReference type="PDB" id="8I7O">
    <property type="method" value="EM"/>
    <property type="resolution" value="4.50 A"/>
    <property type="chains" value="P1/P2=1-620"/>
</dbReference>
<dbReference type="PDB" id="8I7R">
    <property type="method" value="EM"/>
    <property type="resolution" value="6.50 A"/>
    <property type="chains" value="P1/P2/P3=1-620"/>
</dbReference>
<dbReference type="PDB" id="8IYJ">
    <property type="method" value="EM"/>
    <property type="resolution" value="3.50 A"/>
    <property type="chains" value="e/f/g=1-620"/>
</dbReference>
<dbReference type="PDB" id="8TO0">
    <property type="method" value="EM"/>
    <property type="resolution" value="7.70 A"/>
    <property type="chains" value="BG/Ba/Bo=1-620"/>
</dbReference>
<dbReference type="PDBsum" id="8I7O"/>
<dbReference type="PDBsum" id="8I7R"/>
<dbReference type="PDBsum" id="8IYJ"/>
<dbReference type="PDBsum" id="8TO0"/>
<dbReference type="EMDB" id="EMD-35229"/>
<dbReference type="EMDB" id="EMD-35230"/>
<dbReference type="EMDB" id="EMD-35823"/>
<dbReference type="EMDB" id="EMD-41431"/>
<dbReference type="SMR" id="Q5F201"/>
<dbReference type="FunCoup" id="Q5F201">
    <property type="interactions" value="83"/>
</dbReference>
<dbReference type="STRING" id="10090.ENSMUSP00000021287"/>
<dbReference type="iPTMnet" id="Q5F201"/>
<dbReference type="PhosphoSitePlus" id="Q5F201"/>
<dbReference type="PaxDb" id="10090-ENSMUSP00000021287"/>
<dbReference type="ProteomicsDB" id="281538">
    <molecule id="Q5F201-1"/>
</dbReference>
<dbReference type="ProteomicsDB" id="281539">
    <molecule id="Q5F201-2"/>
</dbReference>
<dbReference type="Antibodypedia" id="12661">
    <property type="antibodies" value="97 antibodies from 20 providers"/>
</dbReference>
<dbReference type="Ensembl" id="ENSMUST00000021287.12">
    <molecule id="Q5F201-1"/>
    <property type="protein sequence ID" value="ENSMUSP00000021287.6"/>
    <property type="gene ID" value="ENSMUSG00000020904.12"/>
</dbReference>
<dbReference type="Ensembl" id="ENSMUST00000126766.2">
    <molecule id="Q5F201-2"/>
    <property type="protein sequence ID" value="ENSMUSP00000116496.2"/>
    <property type="gene ID" value="ENSMUSG00000020904.12"/>
</dbReference>
<dbReference type="GeneID" id="71860"/>
<dbReference type="KEGG" id="mmu:71860"/>
<dbReference type="UCSC" id="uc007jnf.1">
    <molecule id="Q5F201-1"/>
    <property type="organism name" value="mouse"/>
</dbReference>
<dbReference type="UCSC" id="uc007jng.1">
    <molecule id="Q5F201-2"/>
    <property type="organism name" value="mouse"/>
</dbReference>
<dbReference type="AGR" id="MGI:1919110"/>
<dbReference type="CTD" id="146845"/>
<dbReference type="MGI" id="MGI:1919110">
    <property type="gene designation" value="Cfap52"/>
</dbReference>
<dbReference type="VEuPathDB" id="HostDB:ENSMUSG00000020904"/>
<dbReference type="eggNOG" id="KOG0266">
    <property type="taxonomic scope" value="Eukaryota"/>
</dbReference>
<dbReference type="GeneTree" id="ENSGT00940000157016"/>
<dbReference type="HOGENOM" id="CLU_009244_2_0_1"/>
<dbReference type="InParanoid" id="Q5F201"/>
<dbReference type="OMA" id="RIMVYNF"/>
<dbReference type="OrthoDB" id="6252103at2759"/>
<dbReference type="PhylomeDB" id="Q5F201"/>
<dbReference type="TreeFam" id="TF323254"/>
<dbReference type="BioGRID-ORCS" id="71860">
    <property type="hits" value="3 hits in 77 CRISPR screens"/>
</dbReference>
<dbReference type="PRO" id="PR:Q5F201"/>
<dbReference type="Proteomes" id="UP000000589">
    <property type="component" value="Chromosome 11"/>
</dbReference>
<dbReference type="RNAct" id="Q5F201">
    <property type="molecule type" value="protein"/>
</dbReference>
<dbReference type="Bgee" id="ENSMUSG00000020904">
    <property type="expression patterns" value="Expressed in otolith organ and 98 other cell types or tissues"/>
</dbReference>
<dbReference type="ExpressionAtlas" id="Q5F201">
    <property type="expression patterns" value="baseline and differential"/>
</dbReference>
<dbReference type="GO" id="GO:0160112">
    <property type="term" value="C:axonemal B tubule inner sheath"/>
    <property type="evidence" value="ECO:0000314"/>
    <property type="project" value="UniProtKB"/>
</dbReference>
<dbReference type="GO" id="GO:0005879">
    <property type="term" value="C:axonemal microtubule"/>
    <property type="evidence" value="ECO:0000250"/>
    <property type="project" value="UniProtKB"/>
</dbReference>
<dbReference type="GO" id="GO:0036126">
    <property type="term" value="C:sperm flagellum"/>
    <property type="evidence" value="ECO:0000314"/>
    <property type="project" value="UniProtKB"/>
</dbReference>
<dbReference type="GO" id="GO:0097225">
    <property type="term" value="C:sperm midpiece"/>
    <property type="evidence" value="ECO:0000315"/>
    <property type="project" value="MGI"/>
</dbReference>
<dbReference type="GO" id="GO:0061966">
    <property type="term" value="P:establishment of left/right asymmetry"/>
    <property type="evidence" value="ECO:0007669"/>
    <property type="project" value="Ensembl"/>
</dbReference>
<dbReference type="GO" id="GO:0030317">
    <property type="term" value="P:flagellated sperm motility"/>
    <property type="evidence" value="ECO:0000314"/>
    <property type="project" value="UniProtKB"/>
</dbReference>
<dbReference type="GO" id="GO:0010467">
    <property type="term" value="P:gene expression"/>
    <property type="evidence" value="ECO:0000315"/>
    <property type="project" value="MGI"/>
</dbReference>
<dbReference type="GO" id="GO:0051012">
    <property type="term" value="P:microtubule sliding"/>
    <property type="evidence" value="ECO:0000315"/>
    <property type="project" value="MGI"/>
</dbReference>
<dbReference type="GO" id="GO:0007338">
    <property type="term" value="P:single fertilization"/>
    <property type="evidence" value="ECO:0000315"/>
    <property type="project" value="MGI"/>
</dbReference>
<dbReference type="GO" id="GO:0007286">
    <property type="term" value="P:spermatid development"/>
    <property type="evidence" value="ECO:0000315"/>
    <property type="project" value="MGI"/>
</dbReference>
<dbReference type="GO" id="GO:0007283">
    <property type="term" value="P:spermatogenesis"/>
    <property type="evidence" value="ECO:0000315"/>
    <property type="project" value="MGI"/>
</dbReference>
<dbReference type="FunFam" id="2.130.10.10:FF:000173">
    <property type="entry name" value="Cilia- and flagella-associated protein 52"/>
    <property type="match status" value="1"/>
</dbReference>
<dbReference type="FunFam" id="2.130.10.10:FF:000207">
    <property type="entry name" value="Cilia- and flagella-associated protein 52"/>
    <property type="match status" value="1"/>
</dbReference>
<dbReference type="FunFam" id="2.130.10.10:FF:000291">
    <property type="entry name" value="Cilia-and flagella-associated protein 52 isoform X1"/>
    <property type="match status" value="1"/>
</dbReference>
<dbReference type="Gene3D" id="2.130.10.10">
    <property type="entry name" value="YVTN repeat-like/Quinoprotein amine dehydrogenase"/>
    <property type="match status" value="3"/>
</dbReference>
<dbReference type="InterPro" id="IPR015943">
    <property type="entry name" value="WD40/YVTN_repeat-like_dom_sf"/>
</dbReference>
<dbReference type="InterPro" id="IPR019775">
    <property type="entry name" value="WD40_repeat_CS"/>
</dbReference>
<dbReference type="InterPro" id="IPR036322">
    <property type="entry name" value="WD40_repeat_dom_sf"/>
</dbReference>
<dbReference type="InterPro" id="IPR001680">
    <property type="entry name" value="WD40_rpt"/>
</dbReference>
<dbReference type="InterPro" id="IPR050630">
    <property type="entry name" value="WD_repeat_EMAP"/>
</dbReference>
<dbReference type="PANTHER" id="PTHR13720:SF14">
    <property type="entry name" value="CILIA- AND FLAGELLA-ASSOCIATED PROTEIN 52"/>
    <property type="match status" value="1"/>
</dbReference>
<dbReference type="PANTHER" id="PTHR13720">
    <property type="entry name" value="WD-40 REPEAT PROTEIN"/>
    <property type="match status" value="1"/>
</dbReference>
<dbReference type="Pfam" id="PF00400">
    <property type="entry name" value="WD40"/>
    <property type="match status" value="6"/>
</dbReference>
<dbReference type="SMART" id="SM00320">
    <property type="entry name" value="WD40"/>
    <property type="match status" value="11"/>
</dbReference>
<dbReference type="SUPFAM" id="SSF50978">
    <property type="entry name" value="WD40 repeat-like"/>
    <property type="match status" value="2"/>
</dbReference>
<dbReference type="PROSITE" id="PS00678">
    <property type="entry name" value="WD_REPEATS_1"/>
    <property type="match status" value="1"/>
</dbReference>
<dbReference type="PROSITE" id="PS50082">
    <property type="entry name" value="WD_REPEATS_2"/>
    <property type="match status" value="5"/>
</dbReference>
<dbReference type="PROSITE" id="PS50294">
    <property type="entry name" value="WD_REPEATS_REGION"/>
    <property type="match status" value="2"/>
</dbReference>
<organism>
    <name type="scientific">Mus musculus</name>
    <name type="common">Mouse</name>
    <dbReference type="NCBI Taxonomy" id="10090"/>
    <lineage>
        <taxon>Eukaryota</taxon>
        <taxon>Metazoa</taxon>
        <taxon>Chordata</taxon>
        <taxon>Craniata</taxon>
        <taxon>Vertebrata</taxon>
        <taxon>Euteleostomi</taxon>
        <taxon>Mammalia</taxon>
        <taxon>Eutheria</taxon>
        <taxon>Euarchontoglires</taxon>
        <taxon>Glires</taxon>
        <taxon>Rodentia</taxon>
        <taxon>Myomorpha</taxon>
        <taxon>Muroidea</taxon>
        <taxon>Muridae</taxon>
        <taxon>Murinae</taxon>
        <taxon>Mus</taxon>
        <taxon>Mus</taxon>
    </lineage>
</organism>
<accession>Q5F201</accession>
<accession>Q5F200</accession>
<accession>Q9D432</accession>
<accession>Q9DA68</accession>
<comment type="function">
    <text evidence="2 3 4 5">Microtubule inner protein (MIP) part of the dynein-decorated doublet microtubules (DMTs) in cilia axoneme (PubMed:37295417, PubMed:37865089, PubMed:37989994). Important for proper ciliary and flagellar beating. May act in cooperation with CFAP45 and axonemal dynein subunit DNAH11 (By similarity). May play a role in cell growth and/or survival (By similarity).</text>
</comment>
<comment type="subunit">
    <text evidence="1 2 3 4 5">Microtubule inner protein component of sperm flagellar doublet microtubules (PubMed:37295417, PubMed:37865089, PubMed:37989994). Interacts with BRCA2 (By similarity). Interacts with the CCT chaperonin complex (By similarity). Interacts with HSP70 (By similarity). Interacts with AK8 (By similarity). Interacts with CFAP45 (By similarity). Interacts with DNAI1 (By similarity). Interacts with IQDC (By similarity).</text>
</comment>
<comment type="subcellular location">
    <subcellularLocation>
        <location evidence="2">Cytoplasm</location>
    </subcellularLocation>
    <subcellularLocation>
        <location evidence="2">Cytoplasm</location>
        <location evidence="2">Cytoskeleton</location>
        <location evidence="2">Cilium axoneme</location>
    </subcellularLocation>
    <subcellularLocation>
        <location evidence="3 4 5">Cytoplasm</location>
        <location evidence="3 4 5">Cytoskeleton</location>
        <location evidence="3 4 5">Flagellum axoneme</location>
    </subcellularLocation>
    <text evidence="2">Located in the proximal region of respiratory cilia.</text>
</comment>
<comment type="alternative products">
    <event type="alternative splicing"/>
    <isoform>
        <id>Q5F201-1</id>
        <name>1</name>
        <sequence type="displayed"/>
    </isoform>
    <isoform>
        <id>Q5F201-2</id>
        <name>2</name>
        <sequence type="described" ref="VSP_018069 VSP_018070"/>
    </isoform>
</comment>
<comment type="similarity">
    <text evidence="7">Belongs to the CFAP52 family.</text>
</comment>
<keyword id="KW-0002">3D-structure</keyword>
<keyword id="KW-0025">Alternative splicing</keyword>
<keyword id="KW-0966">Cell projection</keyword>
<keyword id="KW-0969">Cilium</keyword>
<keyword id="KW-0963">Cytoplasm</keyword>
<keyword id="KW-0206">Cytoskeleton</keyword>
<keyword id="KW-0282">Flagellum</keyword>
<keyword id="KW-1185">Reference proteome</keyword>
<keyword id="KW-0677">Repeat</keyword>
<keyword id="KW-0853">WD repeat</keyword>
<protein>
    <recommendedName>
        <fullName evidence="8">Cilia- and flagella-associated protein 52</fullName>
    </recommendedName>
    <alternativeName>
        <fullName evidence="8">WD repeat-containing protein 16</fullName>
    </alternativeName>
</protein>
<gene>
    <name evidence="8" type="primary">Cfap52</name>
    <name evidence="8" type="synonym">Wdr16</name>
</gene>
<sequence>MEEQVLPELDVAELELQAVIGFNGHVPNGLKCHPDQEHLIYPLGCTVLIQAINTNEQNFLHGHGNNVSCVTISKEGDYIASGQVTFMGFKADIILWDFKKRELIARLSLHKGKIEALAFSPNDLYLVSLGGPDDGSVVVWSIAKRDAICGSPAAGLNVGNATSVVFSRCRDEMFVTAGNGTIRVWELDLPNRKIWPTECQTGQMKRIVLSTGMADDDSFFYLGTTTGDILKMNPKTKLLADTGPVKDKFSLGVSALRCLKMGGLLVGSGAGLLIFCKSPSYKPIKKVQLQGGITSITLRGEGHQFFVGTEESHIYRVNFTDFKETLIATCHFEAVQDIVFPFGTAELFATCAKKDIRVWHTMSKRELLRITVPNMTCHGIDFMRDGKSIISAWDDGKIRAFAPESGRLMYTINSAHRIGVTAIATTSDCKRIISGGGEGEVRVWQVGCQTQKLEEALKEHKSSVSCIRVKKNNEECVTASTDGTCIIWDLVRLRRNQMILANTLFQCVCYHPEEFQIITSGTDRKIAYWEVFDGSVIRELEGSLSGSINGMDITQEGGHFVTGGHDHLVKVWDYNEGEVTHVGVGHSGNIMAMRISPGNQYIVSVSADGAILRWKYPFAS</sequence>
<name>CFA52_MOUSE</name>
<proteinExistence type="evidence at protein level"/>
<feature type="chain" id="PRO_0000233155" description="Cilia- and flagella-associated protein 52" evidence="7">
    <location>
        <begin position="1"/>
        <end position="620"/>
    </location>
</feature>
<feature type="repeat" description="WD 1">
    <location>
        <begin position="62"/>
        <end position="106"/>
    </location>
</feature>
<feature type="repeat" description="WD 2">
    <location>
        <begin position="109"/>
        <end position="150"/>
    </location>
</feature>
<feature type="repeat" description="WD 3">
    <location>
        <begin position="156"/>
        <end position="195"/>
    </location>
</feature>
<feature type="repeat" description="WD 4">
    <location>
        <begin position="288"/>
        <end position="327"/>
    </location>
</feature>
<feature type="repeat" description="WD 5">
    <location>
        <begin position="330"/>
        <end position="369"/>
    </location>
</feature>
<feature type="repeat" description="WD 6">
    <location>
        <begin position="372"/>
        <end position="411"/>
    </location>
</feature>
<feature type="repeat" description="WD 7">
    <location>
        <begin position="415"/>
        <end position="454"/>
    </location>
</feature>
<feature type="repeat" description="WD 8">
    <location>
        <begin position="459"/>
        <end position="498"/>
    </location>
</feature>
<feature type="repeat" description="WD 9">
    <location>
        <begin position="500"/>
        <end position="541"/>
    </location>
</feature>
<feature type="repeat" description="WD 10">
    <location>
        <begin position="543"/>
        <end position="582"/>
    </location>
</feature>
<feature type="repeat" description="WD 11">
    <location>
        <begin position="585"/>
        <end position="620"/>
    </location>
</feature>
<feature type="splice variant" id="VSP_018069" description="In isoform 2." evidence="6">
    <original>F</original>
    <variation>L</variation>
    <location>
        <position position="342"/>
    </location>
</feature>
<feature type="splice variant" id="VSP_018070" description="In isoform 2." evidence="6">
    <location>
        <begin position="343"/>
        <end position="620"/>
    </location>
</feature>
<feature type="sequence conflict" description="In Ref. 1; BAB30457." evidence="7" ref="1">
    <original>T</original>
    <variation>A</variation>
    <location>
        <position position="309"/>
    </location>
</feature>
<evidence type="ECO:0000250" key="1">
    <source>
        <dbReference type="UniProtKB" id="F1SS88"/>
    </source>
</evidence>
<evidence type="ECO:0000250" key="2">
    <source>
        <dbReference type="UniProtKB" id="Q8N1V2"/>
    </source>
</evidence>
<evidence type="ECO:0000269" key="3">
    <source>
    </source>
</evidence>
<evidence type="ECO:0000269" key="4">
    <source>
    </source>
</evidence>
<evidence type="ECO:0000269" key="5">
    <source>
    </source>
</evidence>
<evidence type="ECO:0000303" key="6">
    <source>
    </source>
</evidence>
<evidence type="ECO:0000305" key="7"/>
<evidence type="ECO:0000312" key="8">
    <source>
        <dbReference type="MGI" id="MGI:1919110"/>
    </source>
</evidence>
<evidence type="ECO:0007744" key="9">
    <source>
        <dbReference type="PDB" id="8I7O"/>
    </source>
</evidence>
<evidence type="ECO:0007744" key="10">
    <source>
        <dbReference type="PDB" id="8I7R"/>
    </source>
</evidence>
<evidence type="ECO:0007744" key="11">
    <source>
        <dbReference type="PDB" id="8IYJ"/>
    </source>
</evidence>
<evidence type="ECO:0007744" key="12">
    <source>
        <dbReference type="PDB" id="8TO0"/>
    </source>
</evidence>